<dbReference type="EMBL" id="AAFI02000007">
    <property type="protein sequence ID" value="EAL71401.1"/>
    <property type="molecule type" value="Genomic_DNA"/>
</dbReference>
<dbReference type="RefSeq" id="XP_645335.1">
    <property type="nucleotide sequence ID" value="XM_640243.1"/>
</dbReference>
<dbReference type="FunCoup" id="Q86L99">
    <property type="interactions" value="744"/>
</dbReference>
<dbReference type="PaxDb" id="44689-DDB0233840"/>
<dbReference type="EnsemblProtists" id="EAL71401">
    <property type="protein sequence ID" value="EAL71401"/>
    <property type="gene ID" value="DDB_G0272080"/>
</dbReference>
<dbReference type="GeneID" id="8618297"/>
<dbReference type="KEGG" id="ddi:DDB_G0272080"/>
<dbReference type="dictyBase" id="DDB_G0272080">
    <property type="gene designation" value="gacHH"/>
</dbReference>
<dbReference type="VEuPathDB" id="AmoebaDB:DDB_G0272080"/>
<dbReference type="eggNOG" id="KOG0379">
    <property type="taxonomic scope" value="Eukaryota"/>
</dbReference>
<dbReference type="eggNOG" id="KOG4271">
    <property type="taxonomic scope" value="Eukaryota"/>
</dbReference>
<dbReference type="HOGENOM" id="CLU_247641_0_0_1"/>
<dbReference type="InParanoid" id="Q86L99"/>
<dbReference type="OMA" id="TIRNIFW"/>
<dbReference type="PRO" id="PR:Q86L99"/>
<dbReference type="Proteomes" id="UP000002195">
    <property type="component" value="Chromosome 2"/>
</dbReference>
<dbReference type="GO" id="GO:0005737">
    <property type="term" value="C:cytoplasm"/>
    <property type="evidence" value="ECO:0007669"/>
    <property type="project" value="UniProtKB-SubCell"/>
</dbReference>
<dbReference type="GO" id="GO:0005096">
    <property type="term" value="F:GTPase activator activity"/>
    <property type="evidence" value="ECO:0007669"/>
    <property type="project" value="UniProtKB-KW"/>
</dbReference>
<dbReference type="GO" id="GO:0007165">
    <property type="term" value="P:signal transduction"/>
    <property type="evidence" value="ECO:0007669"/>
    <property type="project" value="InterPro"/>
</dbReference>
<dbReference type="CDD" id="cd00159">
    <property type="entry name" value="RhoGAP"/>
    <property type="match status" value="1"/>
</dbReference>
<dbReference type="Gene3D" id="2.120.10.80">
    <property type="entry name" value="Kelch-type beta propeller"/>
    <property type="match status" value="2"/>
</dbReference>
<dbReference type="Gene3D" id="1.10.555.10">
    <property type="entry name" value="Rho GTPase activation protein"/>
    <property type="match status" value="1"/>
</dbReference>
<dbReference type="InterPro" id="IPR015915">
    <property type="entry name" value="Kelch-typ_b-propeller"/>
</dbReference>
<dbReference type="InterPro" id="IPR008936">
    <property type="entry name" value="Rho_GTPase_activation_prot"/>
</dbReference>
<dbReference type="InterPro" id="IPR000198">
    <property type="entry name" value="RhoGAP_dom"/>
</dbReference>
<dbReference type="PANTHER" id="PTHR46093">
    <property type="entry name" value="ACYL-COA-BINDING DOMAIN-CONTAINING PROTEIN 5"/>
    <property type="match status" value="1"/>
</dbReference>
<dbReference type="PANTHER" id="PTHR46093:SF18">
    <property type="entry name" value="FIBRONECTIN TYPE-III DOMAIN-CONTAINING PROTEIN"/>
    <property type="match status" value="1"/>
</dbReference>
<dbReference type="Pfam" id="PF24681">
    <property type="entry name" value="Kelch_KLHDC2_KLHL20_DRC7"/>
    <property type="match status" value="2"/>
</dbReference>
<dbReference type="Pfam" id="PF00620">
    <property type="entry name" value="RhoGAP"/>
    <property type="match status" value="1"/>
</dbReference>
<dbReference type="SMART" id="SM00324">
    <property type="entry name" value="RhoGAP"/>
    <property type="match status" value="1"/>
</dbReference>
<dbReference type="SUPFAM" id="SSF48350">
    <property type="entry name" value="GTPase activation domain, GAP"/>
    <property type="match status" value="1"/>
</dbReference>
<dbReference type="SUPFAM" id="SSF117281">
    <property type="entry name" value="Kelch motif"/>
    <property type="match status" value="2"/>
</dbReference>
<dbReference type="PROSITE" id="PS50238">
    <property type="entry name" value="RHOGAP"/>
    <property type="match status" value="1"/>
</dbReference>
<evidence type="ECO:0000250" key="1"/>
<evidence type="ECO:0000255" key="2"/>
<evidence type="ECO:0000255" key="3">
    <source>
        <dbReference type="PROSITE-ProRule" id="PRU00172"/>
    </source>
</evidence>
<evidence type="ECO:0000256" key="4">
    <source>
        <dbReference type="SAM" id="MobiDB-lite"/>
    </source>
</evidence>
<accession>Q86L99</accession>
<accession>Q55A58</accession>
<proteinExistence type="inferred from homology"/>
<name>GACHH_DICDI</name>
<protein>
    <recommendedName>
        <fullName>Rho GTPase-activating protein gacHH</fullName>
    </recommendedName>
    <alternativeName>
        <fullName>GTPase activating factor for raC protein HH</fullName>
    </alternativeName>
</protein>
<comment type="function">
    <text evidence="1">Rho GTPase-activating protein involved in the signal transduction pathway.</text>
</comment>
<comment type="subcellular location">
    <subcellularLocation>
        <location evidence="1">Cytoplasm</location>
    </subcellularLocation>
</comment>
<feature type="chain" id="PRO_0000380204" description="Rho GTPase-activating protein gacHH">
    <location>
        <begin position="1"/>
        <end position="1523"/>
    </location>
</feature>
<feature type="repeat" description="Kelch 1">
    <location>
        <begin position="30"/>
        <end position="76"/>
    </location>
</feature>
<feature type="repeat" description="Kelch 2">
    <location>
        <begin position="83"/>
        <end position="133"/>
    </location>
</feature>
<feature type="repeat" description="Kelch 3">
    <location>
        <begin position="135"/>
        <end position="184"/>
    </location>
</feature>
<feature type="repeat" description="Kelch 4">
    <location>
        <begin position="335"/>
        <end position="384"/>
    </location>
</feature>
<feature type="repeat" description="Kelch 5">
    <location>
        <begin position="386"/>
        <end position="441"/>
    </location>
</feature>
<feature type="repeat" description="Kelch 6">
    <location>
        <begin position="443"/>
        <end position="496"/>
    </location>
</feature>
<feature type="domain" description="Rho-GAP" evidence="3">
    <location>
        <begin position="1233"/>
        <end position="1411"/>
    </location>
</feature>
<feature type="region of interest" description="Disordered" evidence="4">
    <location>
        <begin position="161"/>
        <end position="256"/>
    </location>
</feature>
<feature type="region of interest" description="Disordered" evidence="4">
    <location>
        <begin position="510"/>
        <end position="569"/>
    </location>
</feature>
<feature type="region of interest" description="Disordered" evidence="4">
    <location>
        <begin position="609"/>
        <end position="631"/>
    </location>
</feature>
<feature type="region of interest" description="Disordered" evidence="4">
    <location>
        <begin position="647"/>
        <end position="671"/>
    </location>
</feature>
<feature type="region of interest" description="Disordered" evidence="4">
    <location>
        <begin position="748"/>
        <end position="786"/>
    </location>
</feature>
<feature type="region of interest" description="Disordered" evidence="4">
    <location>
        <begin position="861"/>
        <end position="881"/>
    </location>
</feature>
<feature type="region of interest" description="Disordered" evidence="4">
    <location>
        <begin position="905"/>
        <end position="927"/>
    </location>
</feature>
<feature type="region of interest" description="Disordered" evidence="4">
    <location>
        <begin position="963"/>
        <end position="991"/>
    </location>
</feature>
<feature type="region of interest" description="Disordered" evidence="4">
    <location>
        <begin position="1006"/>
        <end position="1096"/>
    </location>
</feature>
<feature type="region of interest" description="Disordered" evidence="4">
    <location>
        <begin position="1143"/>
        <end position="1194"/>
    </location>
</feature>
<feature type="region of interest" description="Disordered" evidence="4">
    <location>
        <begin position="1425"/>
        <end position="1482"/>
    </location>
</feature>
<feature type="coiled-coil region" evidence="2">
    <location>
        <begin position="690"/>
        <end position="729"/>
    </location>
</feature>
<feature type="coiled-coil region" evidence="2">
    <location>
        <begin position="812"/>
        <end position="840"/>
    </location>
</feature>
<feature type="coiled-coil region" evidence="2">
    <location>
        <begin position="1151"/>
        <end position="1228"/>
    </location>
</feature>
<feature type="compositionally biased region" description="Polar residues" evidence="4">
    <location>
        <begin position="161"/>
        <end position="173"/>
    </location>
</feature>
<feature type="compositionally biased region" description="Polar residues" evidence="4">
    <location>
        <begin position="184"/>
        <end position="194"/>
    </location>
</feature>
<feature type="compositionally biased region" description="Low complexity" evidence="4">
    <location>
        <begin position="195"/>
        <end position="211"/>
    </location>
</feature>
<feature type="compositionally biased region" description="Polar residues" evidence="4">
    <location>
        <begin position="212"/>
        <end position="221"/>
    </location>
</feature>
<feature type="compositionally biased region" description="Low complexity" evidence="4">
    <location>
        <begin position="227"/>
        <end position="244"/>
    </location>
</feature>
<feature type="compositionally biased region" description="Gly residues" evidence="4">
    <location>
        <begin position="615"/>
        <end position="626"/>
    </location>
</feature>
<feature type="compositionally biased region" description="Low complexity" evidence="4">
    <location>
        <begin position="870"/>
        <end position="881"/>
    </location>
</feature>
<feature type="compositionally biased region" description="Basic and acidic residues" evidence="4">
    <location>
        <begin position="905"/>
        <end position="915"/>
    </location>
</feature>
<feature type="compositionally biased region" description="Low complexity" evidence="4">
    <location>
        <begin position="971"/>
        <end position="981"/>
    </location>
</feature>
<feature type="compositionally biased region" description="Low complexity" evidence="4">
    <location>
        <begin position="1012"/>
        <end position="1030"/>
    </location>
</feature>
<feature type="compositionally biased region" description="Low complexity" evidence="4">
    <location>
        <begin position="1043"/>
        <end position="1079"/>
    </location>
</feature>
<feature type="compositionally biased region" description="Low complexity" evidence="4">
    <location>
        <begin position="1143"/>
        <end position="1153"/>
    </location>
</feature>
<feature type="compositionally biased region" description="Basic and acidic residues" evidence="4">
    <location>
        <begin position="1155"/>
        <end position="1194"/>
    </location>
</feature>
<feature type="compositionally biased region" description="Low complexity" evidence="4">
    <location>
        <begin position="1430"/>
        <end position="1476"/>
    </location>
</feature>
<feature type="site" description="Arginine finger; crucial for GTP hydrolysis by stabilizing the transition state" evidence="3">
    <location>
        <position position="1264"/>
    </location>
</feature>
<organism>
    <name type="scientific">Dictyostelium discoideum</name>
    <name type="common">Social amoeba</name>
    <dbReference type="NCBI Taxonomy" id="44689"/>
    <lineage>
        <taxon>Eukaryota</taxon>
        <taxon>Amoebozoa</taxon>
        <taxon>Evosea</taxon>
        <taxon>Eumycetozoa</taxon>
        <taxon>Dictyostelia</taxon>
        <taxon>Dictyosteliales</taxon>
        <taxon>Dictyosteliaceae</taxon>
        <taxon>Dictyostelium</taxon>
    </lineage>
</organism>
<reference key="1">
    <citation type="journal article" date="2002" name="Nature">
        <title>Sequence and analysis of chromosome 2 of Dictyostelium discoideum.</title>
        <authorList>
            <person name="Gloeckner G."/>
            <person name="Eichinger L."/>
            <person name="Szafranski K."/>
            <person name="Pachebat J.A."/>
            <person name="Bankier A.T."/>
            <person name="Dear P.H."/>
            <person name="Lehmann R."/>
            <person name="Baumgart C."/>
            <person name="Parra G."/>
            <person name="Abril J.F."/>
            <person name="Guigo R."/>
            <person name="Kumpf K."/>
            <person name="Tunggal B."/>
            <person name="Cox E.C."/>
            <person name="Quail M.A."/>
            <person name="Platzer M."/>
            <person name="Rosenthal A."/>
            <person name="Noegel A.A."/>
        </authorList>
    </citation>
    <scope>NUCLEOTIDE SEQUENCE [LARGE SCALE GENOMIC DNA]</scope>
    <source>
        <strain>AX4</strain>
    </source>
</reference>
<reference key="2">
    <citation type="journal article" date="2005" name="Nature">
        <title>The genome of the social amoeba Dictyostelium discoideum.</title>
        <authorList>
            <person name="Eichinger L."/>
            <person name="Pachebat J.A."/>
            <person name="Gloeckner G."/>
            <person name="Rajandream M.A."/>
            <person name="Sucgang R."/>
            <person name="Berriman M."/>
            <person name="Song J."/>
            <person name="Olsen R."/>
            <person name="Szafranski K."/>
            <person name="Xu Q."/>
            <person name="Tunggal B."/>
            <person name="Kummerfeld S."/>
            <person name="Madera M."/>
            <person name="Konfortov B.A."/>
            <person name="Rivero F."/>
            <person name="Bankier A.T."/>
            <person name="Lehmann R."/>
            <person name="Hamlin N."/>
            <person name="Davies R."/>
            <person name="Gaudet P."/>
            <person name="Fey P."/>
            <person name="Pilcher K."/>
            <person name="Chen G."/>
            <person name="Saunders D."/>
            <person name="Sodergren E.J."/>
            <person name="Davis P."/>
            <person name="Kerhornou A."/>
            <person name="Nie X."/>
            <person name="Hall N."/>
            <person name="Anjard C."/>
            <person name="Hemphill L."/>
            <person name="Bason N."/>
            <person name="Farbrother P."/>
            <person name="Desany B."/>
            <person name="Just E."/>
            <person name="Morio T."/>
            <person name="Rost R."/>
            <person name="Churcher C.M."/>
            <person name="Cooper J."/>
            <person name="Haydock S."/>
            <person name="van Driessche N."/>
            <person name="Cronin A."/>
            <person name="Goodhead I."/>
            <person name="Muzny D.M."/>
            <person name="Mourier T."/>
            <person name="Pain A."/>
            <person name="Lu M."/>
            <person name="Harper D."/>
            <person name="Lindsay R."/>
            <person name="Hauser H."/>
            <person name="James K.D."/>
            <person name="Quiles M."/>
            <person name="Madan Babu M."/>
            <person name="Saito T."/>
            <person name="Buchrieser C."/>
            <person name="Wardroper A."/>
            <person name="Felder M."/>
            <person name="Thangavelu M."/>
            <person name="Johnson D."/>
            <person name="Knights A."/>
            <person name="Loulseged H."/>
            <person name="Mungall K.L."/>
            <person name="Oliver K."/>
            <person name="Price C."/>
            <person name="Quail M.A."/>
            <person name="Urushihara H."/>
            <person name="Hernandez J."/>
            <person name="Rabbinowitsch E."/>
            <person name="Steffen D."/>
            <person name="Sanders M."/>
            <person name="Ma J."/>
            <person name="Kohara Y."/>
            <person name="Sharp S."/>
            <person name="Simmonds M.N."/>
            <person name="Spiegler S."/>
            <person name="Tivey A."/>
            <person name="Sugano S."/>
            <person name="White B."/>
            <person name="Walker D."/>
            <person name="Woodward J.R."/>
            <person name="Winckler T."/>
            <person name="Tanaka Y."/>
            <person name="Shaulsky G."/>
            <person name="Schleicher M."/>
            <person name="Weinstock G.M."/>
            <person name="Rosenthal A."/>
            <person name="Cox E.C."/>
            <person name="Chisholm R.L."/>
            <person name="Gibbs R.A."/>
            <person name="Loomis W.F."/>
            <person name="Platzer M."/>
            <person name="Kay R.R."/>
            <person name="Williams J.G."/>
            <person name="Dear P.H."/>
            <person name="Noegel A.A."/>
            <person name="Barrell B.G."/>
            <person name="Kuspa A."/>
        </authorList>
    </citation>
    <scope>NUCLEOTIDE SEQUENCE [LARGE SCALE GENOMIC DNA]</scope>
    <source>
        <strain>AX4</strain>
    </source>
</reference>
<gene>
    <name type="primary">gacHH</name>
    <name type="ORF">DDB_G0272080</name>
</gene>
<keyword id="KW-0175">Coiled coil</keyword>
<keyword id="KW-0963">Cytoplasm</keyword>
<keyword id="KW-0343">GTPase activation</keyword>
<keyword id="KW-0880">Kelch repeat</keyword>
<keyword id="KW-1185">Reference proteome</keyword>
<keyword id="KW-0677">Repeat</keyword>
<sequence>MSWSSIKLSRLPDATISVWGHTATISGEKDIVIFGGFDFCIEKPTNTTYILHTSQTNGLTKPSVSGSLPPPIYGHSSTQVGRKMFVFGGSLQDNVQVNDMYQFNTSNYSWSKPRPMGEPPIPRYGHSASLIYDNYILIFGGNNTKSSKPLNDIHIFNTERNSWTKPSSNSSTGEIIFNPHDISPRSSTTTPTHQSVNGSNSNSSSSSRVRSATISSHNNSPIVMPLNNNNNNNNNSNNSNNSNNNGGGSPMTTPPTLQQLHLSQLMANGIGMGGSISNGNSDSPPLTPSMMALESSMLNGFKSPLSLSQRLLRSGFRSSPPSARYFHSCSVINGKAFIFGGYNGTTLLNDLYILNIESMEWICPHTKGDLPTPRAGHTSIAIGSRLFIFGGTIEGDPSSSNAHCDNDLYMFEPELNYWTLLKTSGTLPSPRTGHVCLPISSKILIIGGSDAILNNKLKLSNTYHSLETLKLDFSHYSRGGSGGGSNNNIIIHPITSSNSTSSNSIITNYLPHLKPRSSSNSGGGGGSITNTPTTSSLHIKDNSASPSPLTPRSIARNSPKSSIFHDNINNNSNNNLLNTLQEASKFELSPGTPKSIRGIDSLSSVSLTQSIDRNGGSGGGSGGGNGVVSNDRGEFLRHYTTQSILINKNNNNNNNNNSGGSNLSISSNSGSNNSINSNDGLVLQCSTPLCIKKYNSLKDSYLELKQKYQEEREKRLELEKELERYRLSSPITSASSLVDTLSSPNNLNINSNNSTTTTTTTTTTTTTPIPLSTSNNNNNNNNNSTLTVQDQVTTSKQILEIYEDIYNLWGYYEKRVKWKENTEKEANQQLEVIKSKIDLFTSMVGLENHFSFNDDTKSCCSENINGDHNQQQQQQQQQNPQFQIDDNISETNSQISEPALIHETLTPRKSRENSVHHSRSVSNPIPLLSQIVKQSKSGDSTLTVPQQLHSSHNNLIQLASISTPQKPPQQPQQQQQQQPPQENGKEPSKSTQKIFKLLISKKNRASGHFKLSSSNESSNSEETTPTFSNNPNLINDEDDDSQQHQQQTNIGSNSISNINTSNSTTSLSSSVSSTSLQTQEEFEASERSKQKKRLGKALKQMINKDRQLKETAAAALAVSNSNGNLGGGGGGGSINGTTNVSGNGANNLGGLVLTSDKEKEKLEKEREKSERIEREKQEKEREKLEKEREKSERIEREKLEKAEKERLEKEKIEKEKLEKKHKKIKGLFGAKSSNKESLPFRRDVIEKVINHLRENSLDTEGIFRLSGNMESVRGIVKSFAHGEPNLSFEVHNISNALKHYLRSLDPPLIPYEFFLMLLDARKNEDAETIRNIFWKIPSDNRVVLTLLVDLMVKISENSNVNKMNSKNLSIVFGPTILKPRTPTLDRMALMTETQLQCGIIQTFIEDFHYIFSEFPTSGPKSFLGDDDYDSSSFGSNNTPSSHSPHSSSPTLNPAVTTTTTTTTTTNTTTTTNTTTTPTSATISPNIIQTNNCDSALCTPTTLSSTAAIIQSNNNNRTDSNRNN</sequence>